<reference key="1">
    <citation type="journal article" date="2006" name="Genome Res.">
        <title>Massive genome erosion and functional adaptations provide insights into the symbiotic lifestyle of Sodalis glossinidius in the tsetse host.</title>
        <authorList>
            <person name="Toh H."/>
            <person name="Weiss B.L."/>
            <person name="Perkin S.A.H."/>
            <person name="Yamashita A."/>
            <person name="Oshima K."/>
            <person name="Hattori M."/>
            <person name="Aksoy S."/>
        </authorList>
    </citation>
    <scope>NUCLEOTIDE SEQUENCE [LARGE SCALE GENOMIC DNA]</scope>
    <source>
        <strain>morsitans</strain>
    </source>
</reference>
<dbReference type="EC" id="6.3.2.6" evidence="1"/>
<dbReference type="EMBL" id="AP008232">
    <property type="protein sequence ID" value="BAE74999.1"/>
    <property type="molecule type" value="Genomic_DNA"/>
</dbReference>
<dbReference type="RefSeq" id="WP_011411548.1">
    <property type="nucleotide sequence ID" value="NC_007712.1"/>
</dbReference>
<dbReference type="SMR" id="Q2NS76"/>
<dbReference type="STRING" id="343509.SG1724"/>
<dbReference type="KEGG" id="sgl:SG1724"/>
<dbReference type="eggNOG" id="COG0152">
    <property type="taxonomic scope" value="Bacteria"/>
</dbReference>
<dbReference type="HOGENOM" id="CLU_061495_2_1_6"/>
<dbReference type="OrthoDB" id="9801549at2"/>
<dbReference type="BioCyc" id="SGLO343509:SGP1_RS15640-MONOMER"/>
<dbReference type="UniPathway" id="UPA00074">
    <property type="reaction ID" value="UER00131"/>
</dbReference>
<dbReference type="Proteomes" id="UP000001932">
    <property type="component" value="Chromosome"/>
</dbReference>
<dbReference type="GO" id="GO:0005829">
    <property type="term" value="C:cytosol"/>
    <property type="evidence" value="ECO:0007669"/>
    <property type="project" value="TreeGrafter"/>
</dbReference>
<dbReference type="GO" id="GO:0005524">
    <property type="term" value="F:ATP binding"/>
    <property type="evidence" value="ECO:0007669"/>
    <property type="project" value="UniProtKB-KW"/>
</dbReference>
<dbReference type="GO" id="GO:0004639">
    <property type="term" value="F:phosphoribosylaminoimidazolesuccinocarboxamide synthase activity"/>
    <property type="evidence" value="ECO:0007669"/>
    <property type="project" value="UniProtKB-UniRule"/>
</dbReference>
<dbReference type="GO" id="GO:0006189">
    <property type="term" value="P:'de novo' IMP biosynthetic process"/>
    <property type="evidence" value="ECO:0007669"/>
    <property type="project" value="UniProtKB-UniRule"/>
</dbReference>
<dbReference type="GO" id="GO:0009236">
    <property type="term" value="P:cobalamin biosynthetic process"/>
    <property type="evidence" value="ECO:0007669"/>
    <property type="project" value="InterPro"/>
</dbReference>
<dbReference type="CDD" id="cd01415">
    <property type="entry name" value="SAICAR_synt_PurC"/>
    <property type="match status" value="1"/>
</dbReference>
<dbReference type="FunFam" id="3.30.200.20:FF:000086">
    <property type="entry name" value="Phosphoribosylaminoimidazole-succinocarboxamide synthase"/>
    <property type="match status" value="1"/>
</dbReference>
<dbReference type="FunFam" id="3.30.470.20:FF:000006">
    <property type="entry name" value="Phosphoribosylaminoimidazole-succinocarboxamide synthase"/>
    <property type="match status" value="1"/>
</dbReference>
<dbReference type="Gene3D" id="3.30.470.20">
    <property type="entry name" value="ATP-grasp fold, B domain"/>
    <property type="match status" value="1"/>
</dbReference>
<dbReference type="Gene3D" id="3.30.200.20">
    <property type="entry name" value="Phosphorylase Kinase, domain 1"/>
    <property type="match status" value="1"/>
</dbReference>
<dbReference type="HAMAP" id="MF_00137">
    <property type="entry name" value="SAICAR_synth"/>
    <property type="match status" value="1"/>
</dbReference>
<dbReference type="InterPro" id="IPR028923">
    <property type="entry name" value="SAICAR_synt/ADE2_N"/>
</dbReference>
<dbReference type="InterPro" id="IPR033934">
    <property type="entry name" value="SAICAR_synt_PurC"/>
</dbReference>
<dbReference type="InterPro" id="IPR001636">
    <property type="entry name" value="SAICAR_synth"/>
</dbReference>
<dbReference type="InterPro" id="IPR050089">
    <property type="entry name" value="SAICAR_synthetase"/>
</dbReference>
<dbReference type="InterPro" id="IPR018236">
    <property type="entry name" value="SAICAR_synthetase_CS"/>
</dbReference>
<dbReference type="NCBIfam" id="TIGR00081">
    <property type="entry name" value="purC"/>
    <property type="match status" value="1"/>
</dbReference>
<dbReference type="PANTHER" id="PTHR43599">
    <property type="entry name" value="MULTIFUNCTIONAL PROTEIN ADE2"/>
    <property type="match status" value="1"/>
</dbReference>
<dbReference type="PANTHER" id="PTHR43599:SF3">
    <property type="entry name" value="SI:DKEY-6E2.2"/>
    <property type="match status" value="1"/>
</dbReference>
<dbReference type="Pfam" id="PF01259">
    <property type="entry name" value="SAICAR_synt"/>
    <property type="match status" value="1"/>
</dbReference>
<dbReference type="SUPFAM" id="SSF56104">
    <property type="entry name" value="SAICAR synthase-like"/>
    <property type="match status" value="1"/>
</dbReference>
<dbReference type="PROSITE" id="PS01057">
    <property type="entry name" value="SAICAR_SYNTHETASE_1"/>
    <property type="match status" value="1"/>
</dbReference>
<dbReference type="PROSITE" id="PS01058">
    <property type="entry name" value="SAICAR_SYNTHETASE_2"/>
    <property type="match status" value="1"/>
</dbReference>
<sequence length="237" mass="26908">MQKLAELYRGKAKTVYTTEDPDLLILTFRNDTSALDGQRIEQFDRKGMINNNFNYFIMTKLAEAGIPTQIVRLLSDNEMLVKKLAMVPVECVVRNRAAGSLVKRLGVEEGLVLDPPLFDLFLKNDAMHDPMINESYCTTFGWVSEPHLARMKQLTYQANDVLSKIFDDAGLILVDFKLEFGLFNGEIVLGDEFSPDGSRLWDKTTLDKMDKDRFRQNLGGVIEAYEEVAKRIGVTLD</sequence>
<comment type="catalytic activity">
    <reaction evidence="1">
        <text>5-amino-1-(5-phospho-D-ribosyl)imidazole-4-carboxylate + L-aspartate + ATP = (2S)-2-[5-amino-1-(5-phospho-beta-D-ribosyl)imidazole-4-carboxamido]succinate + ADP + phosphate + 2 H(+)</text>
        <dbReference type="Rhea" id="RHEA:22628"/>
        <dbReference type="ChEBI" id="CHEBI:15378"/>
        <dbReference type="ChEBI" id="CHEBI:29991"/>
        <dbReference type="ChEBI" id="CHEBI:30616"/>
        <dbReference type="ChEBI" id="CHEBI:43474"/>
        <dbReference type="ChEBI" id="CHEBI:58443"/>
        <dbReference type="ChEBI" id="CHEBI:77657"/>
        <dbReference type="ChEBI" id="CHEBI:456216"/>
        <dbReference type="EC" id="6.3.2.6"/>
    </reaction>
</comment>
<comment type="pathway">
    <text evidence="1">Purine metabolism; IMP biosynthesis via de novo pathway; 5-amino-1-(5-phospho-D-ribosyl)imidazole-4-carboxamide from 5-amino-1-(5-phospho-D-ribosyl)imidazole-4-carboxylate: step 1/2.</text>
</comment>
<comment type="similarity">
    <text evidence="1">Belongs to the SAICAR synthetase family.</text>
</comment>
<organism>
    <name type="scientific">Sodalis glossinidius (strain morsitans)</name>
    <dbReference type="NCBI Taxonomy" id="343509"/>
    <lineage>
        <taxon>Bacteria</taxon>
        <taxon>Pseudomonadati</taxon>
        <taxon>Pseudomonadota</taxon>
        <taxon>Gammaproteobacteria</taxon>
        <taxon>Enterobacterales</taxon>
        <taxon>Bruguierivoracaceae</taxon>
        <taxon>Sodalis</taxon>
    </lineage>
</organism>
<proteinExistence type="inferred from homology"/>
<accession>Q2NS76</accession>
<name>PUR7_SODGM</name>
<evidence type="ECO:0000255" key="1">
    <source>
        <dbReference type="HAMAP-Rule" id="MF_00137"/>
    </source>
</evidence>
<gene>
    <name evidence="1" type="primary">purC</name>
    <name type="ordered locus">SG1724</name>
</gene>
<protein>
    <recommendedName>
        <fullName evidence="1">Phosphoribosylaminoimidazole-succinocarboxamide synthase</fullName>
        <ecNumber evidence="1">6.3.2.6</ecNumber>
    </recommendedName>
    <alternativeName>
        <fullName evidence="1">SAICAR synthetase</fullName>
    </alternativeName>
</protein>
<feature type="chain" id="PRO_1000018783" description="Phosphoribosylaminoimidazole-succinocarboxamide synthase">
    <location>
        <begin position="1"/>
        <end position="237"/>
    </location>
</feature>
<keyword id="KW-0067">ATP-binding</keyword>
<keyword id="KW-0436">Ligase</keyword>
<keyword id="KW-0547">Nucleotide-binding</keyword>
<keyword id="KW-0658">Purine biosynthesis</keyword>